<proteinExistence type="uncertain"/>
<reference key="1">
    <citation type="journal article" date="1995" name="Yeast">
        <title>New open reading frames, one of which is similar to the nifV gene of Azotobacter vinelandii, found on a 12.5 kbp fragment of chromosome IV of Saccharomyces cerevisiae.</title>
        <authorList>
            <person name="Verhasselt P."/>
            <person name="Voet M."/>
            <person name="Volckaert G."/>
        </authorList>
    </citation>
    <scope>NUCLEOTIDE SEQUENCE [GENOMIC DNA]</scope>
    <source>
        <strain>ATCC 96604 / S288c / FY1679</strain>
    </source>
</reference>
<reference key="2">
    <citation type="journal article" date="1997" name="Nature">
        <title>The nucleotide sequence of Saccharomyces cerevisiae chromosome IV.</title>
        <authorList>
            <person name="Jacq C."/>
            <person name="Alt-Moerbe J."/>
            <person name="Andre B."/>
            <person name="Arnold W."/>
            <person name="Bahr A."/>
            <person name="Ballesta J.P.G."/>
            <person name="Bargues M."/>
            <person name="Baron L."/>
            <person name="Becker A."/>
            <person name="Biteau N."/>
            <person name="Bloecker H."/>
            <person name="Blugeon C."/>
            <person name="Boskovic J."/>
            <person name="Brandt P."/>
            <person name="Brueckner M."/>
            <person name="Buitrago M.J."/>
            <person name="Coster F."/>
            <person name="Delaveau T."/>
            <person name="del Rey F."/>
            <person name="Dujon B."/>
            <person name="Eide L.G."/>
            <person name="Garcia-Cantalejo J.M."/>
            <person name="Goffeau A."/>
            <person name="Gomez-Peris A."/>
            <person name="Granotier C."/>
            <person name="Hanemann V."/>
            <person name="Hankeln T."/>
            <person name="Hoheisel J.D."/>
            <person name="Jaeger W."/>
            <person name="Jimenez A."/>
            <person name="Jonniaux J.-L."/>
            <person name="Kraemer C."/>
            <person name="Kuester H."/>
            <person name="Laamanen P."/>
            <person name="Legros Y."/>
            <person name="Louis E.J."/>
            <person name="Moeller-Rieker S."/>
            <person name="Monnet A."/>
            <person name="Moro M."/>
            <person name="Mueller-Auer S."/>
            <person name="Nussbaumer B."/>
            <person name="Paricio N."/>
            <person name="Paulin L."/>
            <person name="Perea J."/>
            <person name="Perez-Alonso M."/>
            <person name="Perez-Ortin J.E."/>
            <person name="Pohl T.M."/>
            <person name="Prydz H."/>
            <person name="Purnelle B."/>
            <person name="Rasmussen S.W."/>
            <person name="Remacha M.A."/>
            <person name="Revuelta J.L."/>
            <person name="Rieger M."/>
            <person name="Salom D."/>
            <person name="Saluz H.P."/>
            <person name="Saiz J.E."/>
            <person name="Saren A.-M."/>
            <person name="Schaefer M."/>
            <person name="Scharfe M."/>
            <person name="Schmidt E.R."/>
            <person name="Schneider C."/>
            <person name="Scholler P."/>
            <person name="Schwarz S."/>
            <person name="Soler-Mira A."/>
            <person name="Urrestarazu L.A."/>
            <person name="Verhasselt P."/>
            <person name="Vissers S."/>
            <person name="Voet M."/>
            <person name="Volckaert G."/>
            <person name="Wagner G."/>
            <person name="Wambutt R."/>
            <person name="Wedler E."/>
            <person name="Wedler H."/>
            <person name="Woelfl S."/>
            <person name="Harris D.E."/>
            <person name="Bowman S."/>
            <person name="Brown D."/>
            <person name="Churcher C.M."/>
            <person name="Connor R."/>
            <person name="Dedman K."/>
            <person name="Gentles S."/>
            <person name="Hamlin N."/>
            <person name="Hunt S."/>
            <person name="Jones L."/>
            <person name="McDonald S."/>
            <person name="Murphy L.D."/>
            <person name="Niblett D."/>
            <person name="Odell C."/>
            <person name="Oliver K."/>
            <person name="Rajandream M.A."/>
            <person name="Richards C."/>
            <person name="Shore L."/>
            <person name="Walsh S.V."/>
            <person name="Barrell B.G."/>
            <person name="Dietrich F.S."/>
            <person name="Mulligan J.T."/>
            <person name="Allen E."/>
            <person name="Araujo R."/>
            <person name="Aviles E."/>
            <person name="Berno A."/>
            <person name="Carpenter J."/>
            <person name="Chen E."/>
            <person name="Cherry J.M."/>
            <person name="Chung E."/>
            <person name="Duncan M."/>
            <person name="Hunicke-Smith S."/>
            <person name="Hyman R.W."/>
            <person name="Komp C."/>
            <person name="Lashkari D."/>
            <person name="Lew H."/>
            <person name="Lin D."/>
            <person name="Mosedale D."/>
            <person name="Nakahara K."/>
            <person name="Namath A."/>
            <person name="Oefner P."/>
            <person name="Oh C."/>
            <person name="Petel F.X."/>
            <person name="Roberts D."/>
            <person name="Schramm S."/>
            <person name="Schroeder M."/>
            <person name="Shogren T."/>
            <person name="Shroff N."/>
            <person name="Winant A."/>
            <person name="Yelton M.A."/>
            <person name="Botstein D."/>
            <person name="Davis R.W."/>
            <person name="Johnston M."/>
            <person name="Andrews S."/>
            <person name="Brinkman R."/>
            <person name="Cooper J."/>
            <person name="Ding H."/>
            <person name="Du Z."/>
            <person name="Favello A."/>
            <person name="Fulton L."/>
            <person name="Gattung S."/>
            <person name="Greco T."/>
            <person name="Hallsworth K."/>
            <person name="Hawkins J."/>
            <person name="Hillier L.W."/>
            <person name="Jier M."/>
            <person name="Johnson D."/>
            <person name="Johnston L."/>
            <person name="Kirsten J."/>
            <person name="Kucaba T."/>
            <person name="Langston Y."/>
            <person name="Latreille P."/>
            <person name="Le T."/>
            <person name="Mardis E."/>
            <person name="Menezes S."/>
            <person name="Miller N."/>
            <person name="Nhan M."/>
            <person name="Pauley A."/>
            <person name="Peluso D."/>
            <person name="Rifkin L."/>
            <person name="Riles L."/>
            <person name="Taich A."/>
            <person name="Trevaskis E."/>
            <person name="Vignati D."/>
            <person name="Wilcox L."/>
            <person name="Wohldman P."/>
            <person name="Vaudin M."/>
            <person name="Wilson R."/>
            <person name="Waterston R."/>
            <person name="Albermann K."/>
            <person name="Hani J."/>
            <person name="Heumann K."/>
            <person name="Kleine K."/>
            <person name="Mewes H.-W."/>
            <person name="Zollner A."/>
            <person name="Zaccaria P."/>
        </authorList>
    </citation>
    <scope>NUCLEOTIDE SEQUENCE [LARGE SCALE GENOMIC DNA]</scope>
    <source>
        <strain>ATCC 204508 / S288c</strain>
    </source>
</reference>
<reference key="3">
    <citation type="journal article" date="2014" name="G3 (Bethesda)">
        <title>The reference genome sequence of Saccharomyces cerevisiae: Then and now.</title>
        <authorList>
            <person name="Engel S.R."/>
            <person name="Dietrich F.S."/>
            <person name="Fisk D.G."/>
            <person name="Binkley G."/>
            <person name="Balakrishnan R."/>
            <person name="Costanzo M.C."/>
            <person name="Dwight S.S."/>
            <person name="Hitz B.C."/>
            <person name="Karra K."/>
            <person name="Nash R.S."/>
            <person name="Weng S."/>
            <person name="Wong E.D."/>
            <person name="Lloyd P."/>
            <person name="Skrzypek M.S."/>
            <person name="Miyasato S.R."/>
            <person name="Simison M."/>
            <person name="Cherry J.M."/>
        </authorList>
    </citation>
    <scope>GENOME REANNOTATION</scope>
    <source>
        <strain>ATCC 204508 / S288c</strain>
    </source>
</reference>
<reference key="4">
    <citation type="journal article" date="2000" name="FEBS Lett.">
        <title>Genomic exploration of the hemiascomycetous yeasts: 4. The genome of Saccharomyces cerevisiae revisited.</title>
        <authorList>
            <person name="Blandin G."/>
            <person name="Durrens P."/>
            <person name="Tekaia F."/>
            <person name="Aigle M."/>
            <person name="Bolotin-Fukuhara M."/>
            <person name="Bon E."/>
            <person name="Casaregola S."/>
            <person name="de Montigny J."/>
            <person name="Gaillardin C."/>
            <person name="Lepingle A."/>
            <person name="Llorente B."/>
            <person name="Malpertuy A."/>
            <person name="Neuveglise C."/>
            <person name="Ozier-Kalogeropoulos O."/>
            <person name="Perrin A."/>
            <person name="Potier S."/>
            <person name="Souciet J.-L."/>
            <person name="Talla E."/>
            <person name="Toffano-Nioche C."/>
            <person name="Wesolowski-Louvel M."/>
            <person name="Marck C."/>
            <person name="Dujon B."/>
        </authorList>
    </citation>
    <scope>GENOME REANNOTATION</scope>
</reference>
<evidence type="ECO:0000305" key="1"/>
<evidence type="ECO:0000305" key="2">
    <source>
    </source>
</evidence>
<comment type="miscellaneous">
    <text evidence="1">Partially overlaps VMA1.</text>
</comment>
<comment type="caution">
    <text evidence="2">Product of a dubious gene prediction unlikely to encode a functional protein. Because of that it is not part of the S.cerevisiae S288c complete/reference proteome set.</text>
</comment>
<sequence>MRFFLFPYERFQLHQPLFLFFSICFLTLRMKERLLRYNLRYLYALRNVFGTFYSNQRSNQNVATLSKEPFLVFSF</sequence>
<dbReference type="EMBL" id="X83276">
    <property type="status" value="NOT_ANNOTATED_CDS"/>
    <property type="molecule type" value="Genomic_DNA"/>
</dbReference>
<dbReference type="EMBL" id="Z74233">
    <property type="status" value="NOT_ANNOTATED_CDS"/>
    <property type="molecule type" value="Genomic_DNA"/>
</dbReference>
<dbReference type="EMBL" id="Z74235">
    <property type="status" value="NOT_ANNOTATED_CDS"/>
    <property type="molecule type" value="Genomic_DNA"/>
</dbReference>
<dbReference type="SMR" id="P0C5M4"/>
<dbReference type="PaxDb" id="4932-YDL185C-A"/>
<dbReference type="EnsemblFungi" id="YDL185C-A_mRNA">
    <property type="protein sequence ID" value="YDL185C-A"/>
    <property type="gene ID" value="YDL185C-A"/>
</dbReference>
<dbReference type="AGR" id="SGD:S000007600"/>
<dbReference type="SGD" id="S000007600">
    <property type="gene designation" value="YDL185C-A"/>
</dbReference>
<dbReference type="HOGENOM" id="CLU_2672497_0_0_1"/>
<name>YD85A_YEAST</name>
<organism>
    <name type="scientific">Saccharomyces cerevisiae (strain ATCC 204508 / S288c)</name>
    <name type="common">Baker's yeast</name>
    <dbReference type="NCBI Taxonomy" id="559292"/>
    <lineage>
        <taxon>Eukaryota</taxon>
        <taxon>Fungi</taxon>
        <taxon>Dikarya</taxon>
        <taxon>Ascomycota</taxon>
        <taxon>Saccharomycotina</taxon>
        <taxon>Saccharomycetes</taxon>
        <taxon>Saccharomycetales</taxon>
        <taxon>Saccharomycetaceae</taxon>
        <taxon>Saccharomyces</taxon>
    </lineage>
</organism>
<accession>P0C5M4</accession>
<gene>
    <name type="ordered locus">YDL185C-A</name>
</gene>
<protein>
    <recommendedName>
        <fullName>Putative uncharacterized protein YDL185C-A</fullName>
    </recommendedName>
</protein>
<feature type="chain" id="PRO_0000309022" description="Putative uncharacterized protein YDL185C-A">
    <location>
        <begin position="1"/>
        <end position="75"/>
    </location>
</feature>